<organism>
    <name type="scientific">Listeria monocytogenes serotype 4a (strain HCC23)</name>
    <dbReference type="NCBI Taxonomy" id="552536"/>
    <lineage>
        <taxon>Bacteria</taxon>
        <taxon>Bacillati</taxon>
        <taxon>Bacillota</taxon>
        <taxon>Bacilli</taxon>
        <taxon>Bacillales</taxon>
        <taxon>Listeriaceae</taxon>
        <taxon>Listeria</taxon>
    </lineage>
</organism>
<reference key="1">
    <citation type="journal article" date="2011" name="J. Bacteriol.">
        <title>Genome sequence of lineage III Listeria monocytogenes strain HCC23.</title>
        <authorList>
            <person name="Steele C.L."/>
            <person name="Donaldson J.R."/>
            <person name="Paul D."/>
            <person name="Banes M.M."/>
            <person name="Arick T."/>
            <person name="Bridges S.M."/>
            <person name="Lawrence M.L."/>
        </authorList>
    </citation>
    <scope>NUCLEOTIDE SEQUENCE [LARGE SCALE GENOMIC DNA]</scope>
    <source>
        <strain>HCC23</strain>
    </source>
</reference>
<comment type="function">
    <text evidence="1">The alpha subunit is responsible for the aldol cleavage of indoleglycerol phosphate to indole and glyceraldehyde 3-phosphate.</text>
</comment>
<comment type="catalytic activity">
    <reaction evidence="1">
        <text>(1S,2R)-1-C-(indol-3-yl)glycerol 3-phosphate + L-serine = D-glyceraldehyde 3-phosphate + L-tryptophan + H2O</text>
        <dbReference type="Rhea" id="RHEA:10532"/>
        <dbReference type="ChEBI" id="CHEBI:15377"/>
        <dbReference type="ChEBI" id="CHEBI:33384"/>
        <dbReference type="ChEBI" id="CHEBI:57912"/>
        <dbReference type="ChEBI" id="CHEBI:58866"/>
        <dbReference type="ChEBI" id="CHEBI:59776"/>
        <dbReference type="EC" id="4.2.1.20"/>
    </reaction>
</comment>
<comment type="pathway">
    <text evidence="1">Amino-acid biosynthesis; L-tryptophan biosynthesis; L-tryptophan from chorismate: step 5/5.</text>
</comment>
<comment type="subunit">
    <text evidence="1">Tetramer of two alpha and two beta chains.</text>
</comment>
<comment type="similarity">
    <text evidence="1">Belongs to the TrpA family.</text>
</comment>
<evidence type="ECO:0000255" key="1">
    <source>
        <dbReference type="HAMAP-Rule" id="MF_00131"/>
    </source>
</evidence>
<proteinExistence type="inferred from homology"/>
<gene>
    <name evidence="1" type="primary">trpA</name>
    <name type="ordered locus">LMHCC_0935</name>
</gene>
<name>TRPA_LISMH</name>
<protein>
    <recommendedName>
        <fullName evidence="1">Tryptophan synthase alpha chain</fullName>
        <ecNumber evidence="1">4.2.1.20</ecNumber>
    </recommendedName>
</protein>
<feature type="chain" id="PRO_1000198716" description="Tryptophan synthase alpha chain">
    <location>
        <begin position="1"/>
        <end position="257"/>
    </location>
</feature>
<feature type="active site" description="Proton acceptor" evidence="1">
    <location>
        <position position="47"/>
    </location>
</feature>
<feature type="active site" description="Proton acceptor" evidence="1">
    <location>
        <position position="58"/>
    </location>
</feature>
<accession>B8DHB5</accession>
<dbReference type="EC" id="4.2.1.20" evidence="1"/>
<dbReference type="EMBL" id="CP001175">
    <property type="protein sequence ID" value="ACK39284.1"/>
    <property type="molecule type" value="Genomic_DNA"/>
</dbReference>
<dbReference type="RefSeq" id="WP_003726797.1">
    <property type="nucleotide sequence ID" value="NC_011660.1"/>
</dbReference>
<dbReference type="SMR" id="B8DHB5"/>
<dbReference type="KEGG" id="lmh:LMHCC_0935"/>
<dbReference type="HOGENOM" id="CLU_016734_0_0_9"/>
<dbReference type="UniPathway" id="UPA00035">
    <property type="reaction ID" value="UER00044"/>
</dbReference>
<dbReference type="GO" id="GO:0005829">
    <property type="term" value="C:cytosol"/>
    <property type="evidence" value="ECO:0007669"/>
    <property type="project" value="TreeGrafter"/>
</dbReference>
<dbReference type="GO" id="GO:0004834">
    <property type="term" value="F:tryptophan synthase activity"/>
    <property type="evidence" value="ECO:0007669"/>
    <property type="project" value="UniProtKB-UniRule"/>
</dbReference>
<dbReference type="CDD" id="cd04724">
    <property type="entry name" value="Tryptophan_synthase_alpha"/>
    <property type="match status" value="1"/>
</dbReference>
<dbReference type="FunFam" id="3.20.20.70:FF:000238">
    <property type="entry name" value="Tryptophan synthase alpha chain"/>
    <property type="match status" value="1"/>
</dbReference>
<dbReference type="Gene3D" id="3.20.20.70">
    <property type="entry name" value="Aldolase class I"/>
    <property type="match status" value="1"/>
</dbReference>
<dbReference type="HAMAP" id="MF_00131">
    <property type="entry name" value="Trp_synth_alpha"/>
    <property type="match status" value="1"/>
</dbReference>
<dbReference type="InterPro" id="IPR013785">
    <property type="entry name" value="Aldolase_TIM"/>
</dbReference>
<dbReference type="InterPro" id="IPR011060">
    <property type="entry name" value="RibuloseP-bd_barrel"/>
</dbReference>
<dbReference type="InterPro" id="IPR018204">
    <property type="entry name" value="Trp_synthase_alpha_AS"/>
</dbReference>
<dbReference type="InterPro" id="IPR002028">
    <property type="entry name" value="Trp_synthase_suA"/>
</dbReference>
<dbReference type="NCBIfam" id="TIGR00262">
    <property type="entry name" value="trpA"/>
    <property type="match status" value="1"/>
</dbReference>
<dbReference type="PANTHER" id="PTHR43406:SF1">
    <property type="entry name" value="TRYPTOPHAN SYNTHASE ALPHA CHAIN, CHLOROPLASTIC"/>
    <property type="match status" value="1"/>
</dbReference>
<dbReference type="PANTHER" id="PTHR43406">
    <property type="entry name" value="TRYPTOPHAN SYNTHASE, ALPHA CHAIN"/>
    <property type="match status" value="1"/>
</dbReference>
<dbReference type="Pfam" id="PF00290">
    <property type="entry name" value="Trp_syntA"/>
    <property type="match status" value="1"/>
</dbReference>
<dbReference type="SUPFAM" id="SSF51366">
    <property type="entry name" value="Ribulose-phoshate binding barrel"/>
    <property type="match status" value="1"/>
</dbReference>
<dbReference type="PROSITE" id="PS00167">
    <property type="entry name" value="TRP_SYNTHASE_ALPHA"/>
    <property type="match status" value="1"/>
</dbReference>
<keyword id="KW-0028">Amino-acid biosynthesis</keyword>
<keyword id="KW-0057">Aromatic amino acid biosynthesis</keyword>
<keyword id="KW-0456">Lyase</keyword>
<keyword id="KW-0822">Tryptophan biosynthesis</keyword>
<sequence length="257" mass="27902">MTKTLTNKLAKKDHAAVVTYIMGGDGGLDNLEEQLLFLEKSGVSAIEIGIPFSDPVADGPIIQLAGLRALKEQVSLEAILNKLARSKVQIPLIIMSYINPIFHLGIPKFVELVQKTPVKGLIIPDLPYEHQTLITPELQGTDIALIPLVSLTSPKERLEEIAKQAEGFIYAVTVNGTTGVRSEFDAHIDNHLAYLKSISPVPVLAGFGVSSIEHVEKFAHVCDGVIIGSKVVQMLHEEKTAELGAFLQKAAEVRIEN</sequence>